<keyword id="KW-0002">3D-structure</keyword>
<keyword id="KW-0903">Direct protein sequencing</keyword>
<keyword id="KW-0507">mRNA processing</keyword>
<keyword id="KW-0508">mRNA splicing</keyword>
<keyword id="KW-0539">Nucleus</keyword>
<keyword id="KW-0597">Phosphoprotein</keyword>
<keyword id="KW-1267">Proteomics identification</keyword>
<keyword id="KW-1185">Reference proteome</keyword>
<comment type="function">
    <text>May play a role in mRNA splicing.</text>
</comment>
<comment type="subunit">
    <text>Part of a tri-snRNP complex.</text>
</comment>
<comment type="interaction">
    <interactant intactId="EBI-2512550">
        <id>Q8WVK2</id>
    </interactant>
    <interactant intactId="EBI-2555370">
        <id>Q8IWX8</id>
        <label>CHERP</label>
    </interactant>
    <organismsDiffer>false</organismsDiffer>
    <experiments>2</experiments>
</comment>
<comment type="interaction">
    <interactant intactId="EBI-2512550">
        <id>Q8WVK2</id>
    </interactant>
    <interactant intactId="EBI-593303">
        <id>P78362</id>
        <label>SRPK2</label>
    </interactant>
    <organismsDiffer>false</organismsDiffer>
    <experiments>5</experiments>
</comment>
<comment type="subcellular location">
    <subcellularLocation>
        <location evidence="3">Nucleus</location>
    </subcellularLocation>
</comment>
<comment type="PTM">
    <text evidence="2">Phosphorylated in vitro by snRNP-associated protein kinase.</text>
</comment>
<comment type="similarity">
    <text evidence="3">Belongs to the SNUT3 family.</text>
</comment>
<comment type="sequence caution" evidence="3">
    <conflict type="erroneous initiation">
        <sequence resource="EMBL-CDS" id="CAA53949"/>
    </conflict>
</comment>
<organism>
    <name type="scientific">Homo sapiens</name>
    <name type="common">Human</name>
    <dbReference type="NCBI Taxonomy" id="9606"/>
    <lineage>
        <taxon>Eukaryota</taxon>
        <taxon>Metazoa</taxon>
        <taxon>Chordata</taxon>
        <taxon>Craniata</taxon>
        <taxon>Vertebrata</taxon>
        <taxon>Euteleostomi</taxon>
        <taxon>Mammalia</taxon>
        <taxon>Eutheria</taxon>
        <taxon>Euarchontoglires</taxon>
        <taxon>Primates</taxon>
        <taxon>Haplorrhini</taxon>
        <taxon>Catarrhini</taxon>
        <taxon>Hominidae</taxon>
        <taxon>Homo</taxon>
    </lineage>
</organism>
<dbReference type="EMBL" id="X76302">
    <property type="protein sequence ID" value="CAA53949.1"/>
    <property type="status" value="ALT_INIT"/>
    <property type="molecule type" value="mRNA"/>
</dbReference>
<dbReference type="EMBL" id="AC019206">
    <property type="protein sequence ID" value="AAY14866.1"/>
    <property type="molecule type" value="Genomic_DNA"/>
</dbReference>
<dbReference type="EMBL" id="BC017890">
    <property type="protein sequence ID" value="AAH17890.1"/>
    <property type="molecule type" value="mRNA"/>
</dbReference>
<dbReference type="CCDS" id="CCDS33219.1"/>
<dbReference type="PIR" id="I38191">
    <property type="entry name" value="I38191"/>
</dbReference>
<dbReference type="RefSeq" id="NP_006848.1">
    <property type="nucleotide sequence ID" value="NM_006857.3"/>
</dbReference>
<dbReference type="PDB" id="6QW6">
    <property type="method" value="EM"/>
    <property type="resolution" value="2.92 A"/>
    <property type="chains" value="X=1-155"/>
</dbReference>
<dbReference type="PDB" id="6QX9">
    <property type="method" value="EM"/>
    <property type="resolution" value="3.28 A"/>
    <property type="chains" value="X=1-155"/>
</dbReference>
<dbReference type="PDB" id="8H6E">
    <property type="method" value="EM"/>
    <property type="resolution" value="3.20 A"/>
    <property type="chains" value="4X=1-155"/>
</dbReference>
<dbReference type="PDB" id="8H6J">
    <property type="method" value="EM"/>
    <property type="resolution" value="3.25 A"/>
    <property type="chains" value="4X=1-155"/>
</dbReference>
<dbReference type="PDB" id="8QP8">
    <property type="method" value="EM"/>
    <property type="resolution" value="3.50 A"/>
    <property type="chains" value="X=1-155"/>
</dbReference>
<dbReference type="PDB" id="8QP9">
    <property type="method" value="EM"/>
    <property type="resolution" value="4.10 A"/>
    <property type="chains" value="X=1-155"/>
</dbReference>
<dbReference type="PDB" id="8QPK">
    <property type="method" value="EM"/>
    <property type="resolution" value="4.20 A"/>
    <property type="chains" value="X=1-155"/>
</dbReference>
<dbReference type="PDB" id="8QXD">
    <property type="method" value="EM"/>
    <property type="resolution" value="9.60 A"/>
    <property type="chains" value="X=1-155"/>
</dbReference>
<dbReference type="PDB" id="8R08">
    <property type="method" value="EM"/>
    <property type="resolution" value="6.10 A"/>
    <property type="chains" value="X=1-155"/>
</dbReference>
<dbReference type="PDB" id="8R0A">
    <property type="method" value="EM"/>
    <property type="resolution" value="5.80 A"/>
    <property type="chains" value="X=1-155"/>
</dbReference>
<dbReference type="PDBsum" id="6QW6"/>
<dbReference type="PDBsum" id="6QX9"/>
<dbReference type="PDBsum" id="8H6E"/>
<dbReference type="PDBsum" id="8H6J"/>
<dbReference type="PDBsum" id="8QP8"/>
<dbReference type="PDBsum" id="8QP9"/>
<dbReference type="PDBsum" id="8QPK"/>
<dbReference type="PDBsum" id="8QXD"/>
<dbReference type="PDBsum" id="8R08"/>
<dbReference type="PDBsum" id="8R0A"/>
<dbReference type="EMDB" id="EMD-18544"/>
<dbReference type="EMDB" id="EMD-18545"/>
<dbReference type="EMDB" id="EMD-18555"/>
<dbReference type="EMDB" id="EMD-18718"/>
<dbReference type="EMDB" id="EMD-18786"/>
<dbReference type="EMDB" id="EMD-18788"/>
<dbReference type="EMDB" id="EMD-34500"/>
<dbReference type="EMDB" id="EMD-34505"/>
<dbReference type="EMDB" id="EMD-4658"/>
<dbReference type="EMDB" id="EMD-4665"/>
<dbReference type="SMR" id="Q8WVK2"/>
<dbReference type="BioGRID" id="116207">
    <property type="interactions" value="215"/>
</dbReference>
<dbReference type="ComplexPortal" id="CPX-2391">
    <property type="entry name" value="U4/U6.U5 small nuclear ribonucleoprotein complex"/>
</dbReference>
<dbReference type="FunCoup" id="Q8WVK2">
    <property type="interactions" value="655"/>
</dbReference>
<dbReference type="IntAct" id="Q8WVK2">
    <property type="interactions" value="144"/>
</dbReference>
<dbReference type="MINT" id="Q8WVK2"/>
<dbReference type="STRING" id="9606.ENSP00000244227"/>
<dbReference type="GlyGen" id="Q8WVK2">
    <property type="glycosylation" value="1 site, 1 O-linked glycan (1 site)"/>
</dbReference>
<dbReference type="iPTMnet" id="Q8WVK2"/>
<dbReference type="MetOSite" id="Q8WVK2"/>
<dbReference type="PhosphoSitePlus" id="Q8WVK2"/>
<dbReference type="BioMuta" id="SNRNP27"/>
<dbReference type="DMDM" id="74760570"/>
<dbReference type="jPOST" id="Q8WVK2"/>
<dbReference type="MassIVE" id="Q8WVK2"/>
<dbReference type="PaxDb" id="9606-ENSP00000244227"/>
<dbReference type="PeptideAtlas" id="Q8WVK2"/>
<dbReference type="ProteomicsDB" id="74800"/>
<dbReference type="Pumba" id="Q8WVK2"/>
<dbReference type="Antibodypedia" id="31048">
    <property type="antibodies" value="56 antibodies from 15 providers"/>
</dbReference>
<dbReference type="DNASU" id="11017"/>
<dbReference type="Ensembl" id="ENST00000244227.8">
    <property type="protein sequence ID" value="ENSP00000244227.3"/>
    <property type="gene ID" value="ENSG00000124380.11"/>
</dbReference>
<dbReference type="Ensembl" id="ENST00000450162.6">
    <property type="protein sequence ID" value="ENSP00000395144.2"/>
    <property type="gene ID" value="ENSG00000124380.11"/>
</dbReference>
<dbReference type="GeneID" id="11017"/>
<dbReference type="KEGG" id="hsa:11017"/>
<dbReference type="MANE-Select" id="ENST00000244227.8">
    <property type="protein sequence ID" value="ENSP00000244227.3"/>
    <property type="RefSeq nucleotide sequence ID" value="NM_006857.3"/>
    <property type="RefSeq protein sequence ID" value="NP_006848.1"/>
</dbReference>
<dbReference type="UCSC" id="uc002sfw.4">
    <property type="organism name" value="human"/>
</dbReference>
<dbReference type="AGR" id="HGNC:30240"/>
<dbReference type="CTD" id="11017"/>
<dbReference type="DisGeNET" id="11017"/>
<dbReference type="GeneCards" id="SNRNP27"/>
<dbReference type="HGNC" id="HGNC:30240">
    <property type="gene designation" value="SNRNP27"/>
</dbReference>
<dbReference type="HPA" id="ENSG00000124380">
    <property type="expression patterns" value="Low tissue specificity"/>
</dbReference>
<dbReference type="MIM" id="619629">
    <property type="type" value="gene"/>
</dbReference>
<dbReference type="neXtProt" id="NX_Q8WVK2"/>
<dbReference type="OpenTargets" id="ENSG00000124380"/>
<dbReference type="PharmGKB" id="PA164726114"/>
<dbReference type="VEuPathDB" id="HostDB:ENSG00000124380"/>
<dbReference type="eggNOG" id="KOG3263">
    <property type="taxonomic scope" value="Eukaryota"/>
</dbReference>
<dbReference type="GeneTree" id="ENSGT00730000111237"/>
<dbReference type="HOGENOM" id="CLU_075596_2_1_1"/>
<dbReference type="InParanoid" id="Q8WVK2"/>
<dbReference type="OMA" id="VDSSTMW"/>
<dbReference type="OrthoDB" id="9809571at2759"/>
<dbReference type="PAN-GO" id="Q8WVK2">
    <property type="GO annotations" value="0 GO annotations based on evolutionary models"/>
</dbReference>
<dbReference type="TreeFam" id="TF314458"/>
<dbReference type="PathwayCommons" id="Q8WVK2"/>
<dbReference type="Reactome" id="R-HSA-72163">
    <property type="pathway name" value="mRNA Splicing - Major Pathway"/>
</dbReference>
<dbReference type="SignaLink" id="Q8WVK2"/>
<dbReference type="SIGNOR" id="Q8WVK2"/>
<dbReference type="BioGRID-ORCS" id="11017">
    <property type="hits" value="786 hits in 1129 CRISPR screens"/>
</dbReference>
<dbReference type="ChiTaRS" id="SNRNP27">
    <property type="organism name" value="human"/>
</dbReference>
<dbReference type="GenomeRNAi" id="11017"/>
<dbReference type="Pharos" id="Q8WVK2">
    <property type="development level" value="Tbio"/>
</dbReference>
<dbReference type="PRO" id="PR:Q8WVK2"/>
<dbReference type="Proteomes" id="UP000005640">
    <property type="component" value="Chromosome 2"/>
</dbReference>
<dbReference type="RNAct" id="Q8WVK2">
    <property type="molecule type" value="protein"/>
</dbReference>
<dbReference type="Bgee" id="ENSG00000124380">
    <property type="expression patterns" value="Expressed in calcaneal tendon and 203 other cell types or tissues"/>
</dbReference>
<dbReference type="ExpressionAtlas" id="Q8WVK2">
    <property type="expression patterns" value="baseline and differential"/>
</dbReference>
<dbReference type="GO" id="GO:0005654">
    <property type="term" value="C:nucleoplasm"/>
    <property type="evidence" value="ECO:0000304"/>
    <property type="project" value="Reactome"/>
</dbReference>
<dbReference type="GO" id="GO:0005634">
    <property type="term" value="C:nucleus"/>
    <property type="evidence" value="ECO:0000303"/>
    <property type="project" value="ComplexPortal"/>
</dbReference>
<dbReference type="GO" id="GO:0046540">
    <property type="term" value="C:U4/U6 x U5 tri-snRNP complex"/>
    <property type="evidence" value="ECO:0000353"/>
    <property type="project" value="ComplexPortal"/>
</dbReference>
<dbReference type="GO" id="GO:0003676">
    <property type="term" value="F:nucleic acid binding"/>
    <property type="evidence" value="ECO:0000303"/>
    <property type="project" value="UniProtKB"/>
</dbReference>
<dbReference type="GO" id="GO:0000398">
    <property type="term" value="P:mRNA splicing, via spliceosome"/>
    <property type="evidence" value="ECO:0000303"/>
    <property type="project" value="ComplexPortal"/>
</dbReference>
<dbReference type="InterPro" id="IPR013957">
    <property type="entry name" value="SNRNP27"/>
</dbReference>
<dbReference type="PANTHER" id="PTHR31077">
    <property type="entry name" value="U4/U6.U5 SMALL NUCLEAR RIBONUCLEOPROTEIN 27 KDA PROTEIN"/>
    <property type="match status" value="1"/>
</dbReference>
<dbReference type="PANTHER" id="PTHR31077:SF1">
    <property type="entry name" value="U4_U6.U5 SMALL NUCLEAR RIBONUCLEOPROTEIN 27 KDA PROTEIN"/>
    <property type="match status" value="1"/>
</dbReference>
<dbReference type="Pfam" id="PF08648">
    <property type="entry name" value="SNRNP27"/>
    <property type="match status" value="1"/>
</dbReference>
<evidence type="ECO:0000256" key="1">
    <source>
        <dbReference type="SAM" id="MobiDB-lite"/>
    </source>
</evidence>
<evidence type="ECO:0000269" key="2">
    <source>
    </source>
</evidence>
<evidence type="ECO:0000305" key="3"/>
<evidence type="ECO:0007744" key="4">
    <source>
    </source>
</evidence>
<evidence type="ECO:0007744" key="5">
    <source>
    </source>
</evidence>
<evidence type="ECO:0007744" key="6">
    <source>
    </source>
</evidence>
<gene>
    <name type="primary">SNRNP27</name>
</gene>
<name>SNR27_HUMAN</name>
<proteinExistence type="evidence at protein level"/>
<protein>
    <recommendedName>
        <fullName>U4/U6.U5 small nuclear ribonucleoprotein 27 kDa protein</fullName>
        <shortName>U4/U6.U5 snRNP 27 kDa protein</shortName>
        <shortName>U4/U6.U5-27K</shortName>
    </recommendedName>
    <alternativeName>
        <fullName>Nucleic acid-binding protein RY-1</fullName>
    </alternativeName>
    <alternativeName>
        <fullName>U4/U6.U5 tri-snRNP-associated 27 kDa protein</fullName>
        <shortName>27K</shortName>
    </alternativeName>
    <alternativeName>
        <fullName>U4/U6.U5 tri-snRNP-associated protein 3</fullName>
    </alternativeName>
</protein>
<feature type="chain" id="PRO_0000223965" description="U4/U6.U5 small nuclear ribonucleoprotein 27 kDa protein">
    <location>
        <begin position="1"/>
        <end position="155"/>
    </location>
</feature>
<feature type="region of interest" description="Disordered" evidence="1">
    <location>
        <begin position="1"/>
        <end position="97"/>
    </location>
</feature>
<feature type="compositionally biased region" description="Basic residues" evidence="1">
    <location>
        <begin position="1"/>
        <end position="31"/>
    </location>
</feature>
<feature type="compositionally biased region" description="Basic residues" evidence="1">
    <location>
        <begin position="39"/>
        <end position="59"/>
    </location>
</feature>
<feature type="compositionally biased region" description="Basic and acidic residues" evidence="1">
    <location>
        <begin position="66"/>
        <end position="97"/>
    </location>
</feature>
<feature type="modified residue" description="Phosphoserine" evidence="5">
    <location>
        <position position="61"/>
    </location>
</feature>
<feature type="modified residue" description="Phosphoserine" evidence="5">
    <location>
        <position position="65"/>
    </location>
</feature>
<feature type="modified residue" description="Phosphoserine" evidence="6">
    <location>
        <position position="111"/>
    </location>
</feature>
<feature type="modified residue" description="Phosphoserine" evidence="6">
    <location>
        <position position="114"/>
    </location>
</feature>
<feature type="modified residue" description="Phosphoserine" evidence="4 6">
    <location>
        <position position="132"/>
    </location>
</feature>
<feature type="sequence variant" id="VAR_025363" evidence="2">
    <original>T</original>
    <variation>I</variation>
    <location>
        <position position="81"/>
    </location>
</feature>
<feature type="sequence variant" id="VAR_025364" evidence="2">
    <original>S</original>
    <variation>F</variation>
    <location>
        <position position="114"/>
    </location>
</feature>
<reference key="1">
    <citation type="journal article" date="1994" name="J. Gen. Virol.">
        <title>Altered expression of the novel cellular gene as a consequence of integration of human T cell lymphotropic virus type 1.</title>
        <authorList>
            <person name="Nakamura Y."/>
            <person name="Moriuchi R."/>
            <person name="Nakayama D."/>
            <person name="Yamashita I."/>
            <person name="Higashiyama Y."/>
            <person name="Yamamoto T."/>
            <person name="Kusano Y."/>
            <person name="Hino S."/>
            <person name="Miyamoto T."/>
            <person name="Katamine S."/>
        </authorList>
    </citation>
    <scope>NUCLEOTIDE SEQUENCE [MRNA]</scope>
    <source>
        <tissue>T-cell</tissue>
    </source>
</reference>
<reference key="2">
    <citation type="journal article" date="2005" name="Nature">
        <title>Generation and annotation of the DNA sequences of human chromosomes 2 and 4.</title>
        <authorList>
            <person name="Hillier L.W."/>
            <person name="Graves T.A."/>
            <person name="Fulton R.S."/>
            <person name="Fulton L.A."/>
            <person name="Pepin K.H."/>
            <person name="Minx P."/>
            <person name="Wagner-McPherson C."/>
            <person name="Layman D."/>
            <person name="Wylie K."/>
            <person name="Sekhon M."/>
            <person name="Becker M.C."/>
            <person name="Fewell G.A."/>
            <person name="Delehaunty K.D."/>
            <person name="Miner T.L."/>
            <person name="Nash W.E."/>
            <person name="Kremitzki C."/>
            <person name="Oddy L."/>
            <person name="Du H."/>
            <person name="Sun H."/>
            <person name="Bradshaw-Cordum H."/>
            <person name="Ali J."/>
            <person name="Carter J."/>
            <person name="Cordes M."/>
            <person name="Harris A."/>
            <person name="Isak A."/>
            <person name="van Brunt A."/>
            <person name="Nguyen C."/>
            <person name="Du F."/>
            <person name="Courtney L."/>
            <person name="Kalicki J."/>
            <person name="Ozersky P."/>
            <person name="Abbott S."/>
            <person name="Armstrong J."/>
            <person name="Belter E.A."/>
            <person name="Caruso L."/>
            <person name="Cedroni M."/>
            <person name="Cotton M."/>
            <person name="Davidson T."/>
            <person name="Desai A."/>
            <person name="Elliott G."/>
            <person name="Erb T."/>
            <person name="Fronick C."/>
            <person name="Gaige T."/>
            <person name="Haakenson W."/>
            <person name="Haglund K."/>
            <person name="Holmes A."/>
            <person name="Harkins R."/>
            <person name="Kim K."/>
            <person name="Kruchowski S.S."/>
            <person name="Strong C.M."/>
            <person name="Grewal N."/>
            <person name="Goyea E."/>
            <person name="Hou S."/>
            <person name="Levy A."/>
            <person name="Martinka S."/>
            <person name="Mead K."/>
            <person name="McLellan M.D."/>
            <person name="Meyer R."/>
            <person name="Randall-Maher J."/>
            <person name="Tomlinson C."/>
            <person name="Dauphin-Kohlberg S."/>
            <person name="Kozlowicz-Reilly A."/>
            <person name="Shah N."/>
            <person name="Swearengen-Shahid S."/>
            <person name="Snider J."/>
            <person name="Strong J.T."/>
            <person name="Thompson J."/>
            <person name="Yoakum M."/>
            <person name="Leonard S."/>
            <person name="Pearman C."/>
            <person name="Trani L."/>
            <person name="Radionenko M."/>
            <person name="Waligorski J.E."/>
            <person name="Wang C."/>
            <person name="Rock S.M."/>
            <person name="Tin-Wollam A.-M."/>
            <person name="Maupin R."/>
            <person name="Latreille P."/>
            <person name="Wendl M.C."/>
            <person name="Yang S.-P."/>
            <person name="Pohl C."/>
            <person name="Wallis J.W."/>
            <person name="Spieth J."/>
            <person name="Bieri T.A."/>
            <person name="Berkowicz N."/>
            <person name="Nelson J.O."/>
            <person name="Osborne J."/>
            <person name="Ding L."/>
            <person name="Meyer R."/>
            <person name="Sabo A."/>
            <person name="Shotland Y."/>
            <person name="Sinha P."/>
            <person name="Wohldmann P.E."/>
            <person name="Cook L.L."/>
            <person name="Hickenbotham M.T."/>
            <person name="Eldred J."/>
            <person name="Williams D."/>
            <person name="Jones T.A."/>
            <person name="She X."/>
            <person name="Ciccarelli F.D."/>
            <person name="Izaurralde E."/>
            <person name="Taylor J."/>
            <person name="Schmutz J."/>
            <person name="Myers R.M."/>
            <person name="Cox D.R."/>
            <person name="Huang X."/>
            <person name="McPherson J.D."/>
            <person name="Mardis E.R."/>
            <person name="Clifton S.W."/>
            <person name="Warren W.C."/>
            <person name="Chinwalla A.T."/>
            <person name="Eddy S.R."/>
            <person name="Marra M.A."/>
            <person name="Ovcharenko I."/>
            <person name="Furey T.S."/>
            <person name="Miller W."/>
            <person name="Eichler E.E."/>
            <person name="Bork P."/>
            <person name="Suyama M."/>
            <person name="Torrents D."/>
            <person name="Waterston R.H."/>
            <person name="Wilson R.K."/>
        </authorList>
    </citation>
    <scope>NUCLEOTIDE SEQUENCE [LARGE SCALE GENOMIC DNA]</scope>
</reference>
<reference key="3">
    <citation type="journal article" date="2004" name="Genome Res.">
        <title>The status, quality, and expansion of the NIH full-length cDNA project: the Mammalian Gene Collection (MGC).</title>
        <authorList>
            <consortium name="The MGC Project Team"/>
        </authorList>
    </citation>
    <scope>NUCLEOTIDE SEQUENCE [LARGE SCALE MRNA]</scope>
    <source>
        <tissue>Testis</tissue>
    </source>
</reference>
<reference key="4">
    <citation type="journal article" date="1997" name="RNA">
        <title>The [U4/U6.U5] tri-snRNP-specific 27K protein is a novel SR protein that can be phosphorylated by the snRNP-associated protein kinase.</title>
        <authorList>
            <person name="Fetzer S."/>
            <person name="Lauber J."/>
            <person name="Will C.L."/>
            <person name="Luehrmann R."/>
        </authorList>
    </citation>
    <scope>PROTEIN SEQUENCE OF 108-110 AND 141-152</scope>
    <scope>IDENTIFICATION BY MASS SPECTROMETRY</scope>
    <scope>VARIANTS ILE-81 AND PHE-114</scope>
    <scope>PHOSPHORYLATION</scope>
</reference>
<reference key="5">
    <citation type="journal article" date="2007" name="Science">
        <title>ATM and ATR substrate analysis reveals extensive protein networks responsive to DNA damage.</title>
        <authorList>
            <person name="Matsuoka S."/>
            <person name="Ballif B.A."/>
            <person name="Smogorzewska A."/>
            <person name="McDonald E.R. III"/>
            <person name="Hurov K.E."/>
            <person name="Luo J."/>
            <person name="Bakalarski C.E."/>
            <person name="Zhao Z."/>
            <person name="Solimini N."/>
            <person name="Lerenthal Y."/>
            <person name="Shiloh Y."/>
            <person name="Gygi S.P."/>
            <person name="Elledge S.J."/>
        </authorList>
    </citation>
    <scope>PHOSPHORYLATION [LARGE SCALE ANALYSIS] AT SER-132</scope>
    <scope>IDENTIFICATION BY MASS SPECTROMETRY [LARGE SCALE ANALYSIS]</scope>
    <source>
        <tissue>Embryonic kidney</tissue>
    </source>
</reference>
<reference key="6">
    <citation type="journal article" date="2008" name="Proc. Natl. Acad. Sci. U.S.A.">
        <title>A quantitative atlas of mitotic phosphorylation.</title>
        <authorList>
            <person name="Dephoure N."/>
            <person name="Zhou C."/>
            <person name="Villen J."/>
            <person name="Beausoleil S.A."/>
            <person name="Bakalarski C.E."/>
            <person name="Elledge S.J."/>
            <person name="Gygi S.P."/>
        </authorList>
    </citation>
    <scope>PHOSPHORYLATION [LARGE SCALE ANALYSIS] AT SER-61 AND SER-65</scope>
    <scope>IDENTIFICATION BY MASS SPECTROMETRY [LARGE SCALE ANALYSIS]</scope>
    <source>
        <tissue>Cervix carcinoma</tissue>
    </source>
</reference>
<reference key="7">
    <citation type="journal article" date="2011" name="BMC Syst. Biol.">
        <title>Initial characterization of the human central proteome.</title>
        <authorList>
            <person name="Burkard T.R."/>
            <person name="Planyavsky M."/>
            <person name="Kaupe I."/>
            <person name="Breitwieser F.P."/>
            <person name="Buerckstuemmer T."/>
            <person name="Bennett K.L."/>
            <person name="Superti-Furga G."/>
            <person name="Colinge J."/>
        </authorList>
    </citation>
    <scope>IDENTIFICATION BY MASS SPECTROMETRY [LARGE SCALE ANALYSIS]</scope>
</reference>
<reference key="8">
    <citation type="journal article" date="2013" name="J. Proteome Res.">
        <title>Toward a comprehensive characterization of a human cancer cell phosphoproteome.</title>
        <authorList>
            <person name="Zhou H."/>
            <person name="Di Palma S."/>
            <person name="Preisinger C."/>
            <person name="Peng M."/>
            <person name="Polat A.N."/>
            <person name="Heck A.J."/>
            <person name="Mohammed S."/>
        </authorList>
    </citation>
    <scope>PHOSPHORYLATION [LARGE SCALE ANALYSIS] AT SER-111; SER-114 AND SER-132</scope>
    <scope>IDENTIFICATION BY MASS SPECTROMETRY [LARGE SCALE ANALYSIS]</scope>
    <source>
        <tissue>Cervix carcinoma</tissue>
        <tissue>Erythroleukemia</tissue>
    </source>
</reference>
<accession>Q8WVK2</accession>
<accession>Q15410</accession>
<sequence length="155" mass="18860">MGRSRSRSPRRERRRSRSTSRERERRRRERSRSRERDRRRSRSRSPHRRRSRSPRRHRSTSPSPSRLKERRDEEKKETKETKSKERQITEEDLEGKTEEEIEMMKLMGFASFDSTKGKKVDGSVNAYAINVSQKRKYRQYMNRKGGFNRPLDFIA</sequence>